<proteinExistence type="inferred from homology"/>
<organism>
    <name type="scientific">Xanthomonas campestris pv. campestris (strain B100)</name>
    <dbReference type="NCBI Taxonomy" id="509169"/>
    <lineage>
        <taxon>Bacteria</taxon>
        <taxon>Pseudomonadati</taxon>
        <taxon>Pseudomonadota</taxon>
        <taxon>Gammaproteobacteria</taxon>
        <taxon>Lysobacterales</taxon>
        <taxon>Lysobacteraceae</taxon>
        <taxon>Xanthomonas</taxon>
    </lineage>
</organism>
<keyword id="KW-0131">Cell cycle</keyword>
<keyword id="KW-0132">Cell division</keyword>
<keyword id="KW-0143">Chaperone</keyword>
<keyword id="KW-0963">Cytoplasm</keyword>
<keyword id="KW-0413">Isomerase</keyword>
<keyword id="KW-0697">Rotamase</keyword>
<name>TIG_XANCB</name>
<gene>
    <name evidence="1" type="primary">tig</name>
    <name type="ordered locus">xcc-b100_3382</name>
</gene>
<protein>
    <recommendedName>
        <fullName evidence="1">Trigger factor</fullName>
        <shortName evidence="1">TF</shortName>
        <ecNumber evidence="1">5.2.1.8</ecNumber>
    </recommendedName>
    <alternativeName>
        <fullName evidence="1">PPIase</fullName>
    </alternativeName>
</protein>
<dbReference type="EC" id="5.2.1.8" evidence="1"/>
<dbReference type="EMBL" id="AM920689">
    <property type="protein sequence ID" value="CAP52747.1"/>
    <property type="molecule type" value="Genomic_DNA"/>
</dbReference>
<dbReference type="SMR" id="B0RTF8"/>
<dbReference type="KEGG" id="xca:xcc-b100_3382"/>
<dbReference type="HOGENOM" id="CLU_033058_2_0_6"/>
<dbReference type="Proteomes" id="UP000001188">
    <property type="component" value="Chromosome"/>
</dbReference>
<dbReference type="GO" id="GO:0005737">
    <property type="term" value="C:cytoplasm"/>
    <property type="evidence" value="ECO:0007669"/>
    <property type="project" value="UniProtKB-SubCell"/>
</dbReference>
<dbReference type="GO" id="GO:0003755">
    <property type="term" value="F:peptidyl-prolyl cis-trans isomerase activity"/>
    <property type="evidence" value="ECO:0007669"/>
    <property type="project" value="UniProtKB-UniRule"/>
</dbReference>
<dbReference type="GO" id="GO:0044183">
    <property type="term" value="F:protein folding chaperone"/>
    <property type="evidence" value="ECO:0007669"/>
    <property type="project" value="TreeGrafter"/>
</dbReference>
<dbReference type="GO" id="GO:0043022">
    <property type="term" value="F:ribosome binding"/>
    <property type="evidence" value="ECO:0007669"/>
    <property type="project" value="TreeGrafter"/>
</dbReference>
<dbReference type="GO" id="GO:0051083">
    <property type="term" value="P:'de novo' cotranslational protein folding"/>
    <property type="evidence" value="ECO:0007669"/>
    <property type="project" value="TreeGrafter"/>
</dbReference>
<dbReference type="GO" id="GO:0051301">
    <property type="term" value="P:cell division"/>
    <property type="evidence" value="ECO:0007669"/>
    <property type="project" value="UniProtKB-KW"/>
</dbReference>
<dbReference type="GO" id="GO:0061077">
    <property type="term" value="P:chaperone-mediated protein folding"/>
    <property type="evidence" value="ECO:0007669"/>
    <property type="project" value="TreeGrafter"/>
</dbReference>
<dbReference type="GO" id="GO:0015031">
    <property type="term" value="P:protein transport"/>
    <property type="evidence" value="ECO:0007669"/>
    <property type="project" value="UniProtKB-UniRule"/>
</dbReference>
<dbReference type="GO" id="GO:0043335">
    <property type="term" value="P:protein unfolding"/>
    <property type="evidence" value="ECO:0007669"/>
    <property type="project" value="TreeGrafter"/>
</dbReference>
<dbReference type="Gene3D" id="3.10.50.40">
    <property type="match status" value="1"/>
</dbReference>
<dbReference type="Gene3D" id="3.30.70.1050">
    <property type="entry name" value="Trigger factor ribosome-binding domain"/>
    <property type="match status" value="1"/>
</dbReference>
<dbReference type="Gene3D" id="1.10.3120.10">
    <property type="entry name" value="Trigger factor, C-terminal domain"/>
    <property type="match status" value="1"/>
</dbReference>
<dbReference type="HAMAP" id="MF_00303">
    <property type="entry name" value="Trigger_factor_Tig"/>
    <property type="match status" value="1"/>
</dbReference>
<dbReference type="InterPro" id="IPR046357">
    <property type="entry name" value="PPIase_dom_sf"/>
</dbReference>
<dbReference type="InterPro" id="IPR005215">
    <property type="entry name" value="Trig_fac"/>
</dbReference>
<dbReference type="InterPro" id="IPR008880">
    <property type="entry name" value="Trigger_fac_C"/>
</dbReference>
<dbReference type="InterPro" id="IPR037041">
    <property type="entry name" value="Trigger_fac_C_sf"/>
</dbReference>
<dbReference type="InterPro" id="IPR008881">
    <property type="entry name" value="Trigger_fac_ribosome-bd_bac"/>
</dbReference>
<dbReference type="InterPro" id="IPR036611">
    <property type="entry name" value="Trigger_fac_ribosome-bd_sf"/>
</dbReference>
<dbReference type="InterPro" id="IPR027304">
    <property type="entry name" value="Trigger_fact/SurA_dom_sf"/>
</dbReference>
<dbReference type="NCBIfam" id="TIGR00115">
    <property type="entry name" value="tig"/>
    <property type="match status" value="1"/>
</dbReference>
<dbReference type="PANTHER" id="PTHR30560">
    <property type="entry name" value="TRIGGER FACTOR CHAPERONE AND PEPTIDYL-PROLYL CIS/TRANS ISOMERASE"/>
    <property type="match status" value="1"/>
</dbReference>
<dbReference type="PANTHER" id="PTHR30560:SF3">
    <property type="entry name" value="TRIGGER FACTOR-LIKE PROTEIN TIG, CHLOROPLASTIC"/>
    <property type="match status" value="1"/>
</dbReference>
<dbReference type="Pfam" id="PF05698">
    <property type="entry name" value="Trigger_C"/>
    <property type="match status" value="1"/>
</dbReference>
<dbReference type="Pfam" id="PF05697">
    <property type="entry name" value="Trigger_N"/>
    <property type="match status" value="1"/>
</dbReference>
<dbReference type="PIRSF" id="PIRSF003095">
    <property type="entry name" value="Trigger_factor"/>
    <property type="match status" value="1"/>
</dbReference>
<dbReference type="SUPFAM" id="SSF54534">
    <property type="entry name" value="FKBP-like"/>
    <property type="match status" value="1"/>
</dbReference>
<dbReference type="SUPFAM" id="SSF109998">
    <property type="entry name" value="Triger factor/SurA peptide-binding domain-like"/>
    <property type="match status" value="1"/>
</dbReference>
<dbReference type="SUPFAM" id="SSF102735">
    <property type="entry name" value="Trigger factor ribosome-binding domain"/>
    <property type="match status" value="1"/>
</dbReference>
<accession>B0RTF8</accession>
<reference key="1">
    <citation type="journal article" date="2008" name="J. Biotechnol.">
        <title>The genome of Xanthomonas campestris pv. campestris B100 and its use for the reconstruction of metabolic pathways involved in xanthan biosynthesis.</title>
        <authorList>
            <person name="Vorhoelter F.-J."/>
            <person name="Schneiker S."/>
            <person name="Goesmann A."/>
            <person name="Krause L."/>
            <person name="Bekel T."/>
            <person name="Kaiser O."/>
            <person name="Linke B."/>
            <person name="Patschkowski T."/>
            <person name="Rueckert C."/>
            <person name="Schmid J."/>
            <person name="Sidhu V.K."/>
            <person name="Sieber V."/>
            <person name="Tauch A."/>
            <person name="Watt S.A."/>
            <person name="Weisshaar B."/>
            <person name="Becker A."/>
            <person name="Niehaus K."/>
            <person name="Puehler A."/>
        </authorList>
    </citation>
    <scope>NUCLEOTIDE SEQUENCE [LARGE SCALE GENOMIC DNA]</scope>
    <source>
        <strain>B100</strain>
    </source>
</reference>
<feature type="chain" id="PRO_1000115600" description="Trigger factor">
    <location>
        <begin position="1"/>
        <end position="430"/>
    </location>
</feature>
<feature type="domain" description="PPIase FKBP-type" evidence="1">
    <location>
        <begin position="157"/>
        <end position="242"/>
    </location>
</feature>
<evidence type="ECO:0000255" key="1">
    <source>
        <dbReference type="HAMAP-Rule" id="MF_00303"/>
    </source>
</evidence>
<sequence length="430" mass="48342">MQASIESTGNLERRLTFTLPQERLETHVGGRLRELARTTRIKGFRPGKVPTKVIEQRFGQQVRAEAMEGLLRETFDSAVREHSLRLAGNPRIDQGESDFDFVATFEVVPDFGDIDVTNLSVVRHTAEVTDADIDQMIENLRLQRRTWNPVERGAQVGDLVALETWSQAGNERLPAEGVETGSSVLGSGVMFDQIEKGLEGLSKGEDKALSIDFPADWRVPQLAGKTVQVHVKAVEVSEPVLPEVNKEFIKSFGVKSGDAEQFRADIRTNLERELKGALMNRLRREVGEQLIAAYAHVEMPPRLVENEARSMLAQQVDQMRRSGRNPGEIPADAHQGFMDAAAKRVLVGLLVGEVARRNELRLESKRVSETLRLIASTYEEPEQVIEMYRNDPQLMSGLRSRVMEEQVIDWIAERAKHTEQSLSFQDAIRV</sequence>
<comment type="function">
    <text evidence="1">Involved in protein export. Acts as a chaperone by maintaining the newly synthesized protein in an open conformation. Functions as a peptidyl-prolyl cis-trans isomerase.</text>
</comment>
<comment type="catalytic activity">
    <reaction evidence="1">
        <text>[protein]-peptidylproline (omega=180) = [protein]-peptidylproline (omega=0)</text>
        <dbReference type="Rhea" id="RHEA:16237"/>
        <dbReference type="Rhea" id="RHEA-COMP:10747"/>
        <dbReference type="Rhea" id="RHEA-COMP:10748"/>
        <dbReference type="ChEBI" id="CHEBI:83833"/>
        <dbReference type="ChEBI" id="CHEBI:83834"/>
        <dbReference type="EC" id="5.2.1.8"/>
    </reaction>
</comment>
<comment type="subcellular location">
    <subcellularLocation>
        <location>Cytoplasm</location>
    </subcellularLocation>
    <text evidence="1">About half TF is bound to the ribosome near the polypeptide exit tunnel while the other half is free in the cytoplasm.</text>
</comment>
<comment type="domain">
    <text evidence="1">Consists of 3 domains; the N-terminus binds the ribosome, the middle domain has PPIase activity, while the C-terminus has intrinsic chaperone activity on its own.</text>
</comment>
<comment type="similarity">
    <text evidence="1">Belongs to the FKBP-type PPIase family. Tig subfamily.</text>
</comment>